<reference key="1">
    <citation type="submission" date="2004-07" db="EMBL/GenBank/DDBJ databases">
        <authorList>
            <consortium name="NIH - Xenopus Gene Collection (XGC) project"/>
        </authorList>
    </citation>
    <scope>NUCLEOTIDE SEQUENCE [LARGE SCALE MRNA]</scope>
    <source>
        <tissue>Embryo</tissue>
    </source>
</reference>
<evidence type="ECO:0000250" key="1"/>
<evidence type="ECO:0000250" key="2">
    <source>
        <dbReference type="UniProtKB" id="Q12824"/>
    </source>
</evidence>
<evidence type="ECO:0000250" key="3">
    <source>
        <dbReference type="UniProtKB" id="Q9Z0H3"/>
    </source>
</evidence>
<evidence type="ECO:0000305" key="4"/>
<comment type="function">
    <text evidence="2">Involved in chromatin-remodeling. Core component of the BAF (SWI/SNF) complex. This ATP-dependent chromatin-remodeling complex plays important roles in cell proliferation and differentiation, in cellular antiviral activities and inhibition of tumor formation. Belongs to the neural progenitors-specific chromatin remodeling complex (npBAF complex) and the neuron-specific chromatin remodeling complex (nBAF complex) and may play a role in neural development (By similarity).</text>
</comment>
<comment type="subunit">
    <text evidence="2 3">Component of the multiprotein chromatin-remodeling complexes SWI/SNF. Component of neural progenitors-specific chromatin remodeling complex (npBAF complex) and the neuron-specific chromatin remodeling complex (nBAF complex) (By similarity). Component of the BAF (SWI/SNF) chromatin remodeling complex. Component of the SWI/SNF-B (PBAF) chromatin remodeling complex. Binds to double-stranded DNA (By similarity).</text>
</comment>
<comment type="subcellular location">
    <subcellularLocation>
        <location evidence="1">Nucleus</location>
    </subcellularLocation>
</comment>
<comment type="domain">
    <text evidence="2">The N-terminal DNA-binding region is structurally similar to winged helix domains.</text>
</comment>
<comment type="similarity">
    <text evidence="4">Belongs to the SNF5 family.</text>
</comment>
<proteinExistence type="evidence at transcript level"/>
<gene>
    <name type="primary">smarcb1</name>
</gene>
<feature type="chain" id="PRO_0000205952" description="SWI/SNF-related matrix-associated actin-dependent regulator of chromatin subfamily B member 1">
    <location>
        <begin position="1"/>
        <end position="378"/>
    </location>
</feature>
<feature type="region of interest" description="DNA-binding" evidence="2">
    <location>
        <begin position="1"/>
        <end position="106"/>
    </location>
</feature>
<organism>
    <name type="scientific">Xenopus tropicalis</name>
    <name type="common">Western clawed frog</name>
    <name type="synonym">Silurana tropicalis</name>
    <dbReference type="NCBI Taxonomy" id="8364"/>
    <lineage>
        <taxon>Eukaryota</taxon>
        <taxon>Metazoa</taxon>
        <taxon>Chordata</taxon>
        <taxon>Craniata</taxon>
        <taxon>Vertebrata</taxon>
        <taxon>Euteleostomi</taxon>
        <taxon>Amphibia</taxon>
        <taxon>Batrachia</taxon>
        <taxon>Anura</taxon>
        <taxon>Pipoidea</taxon>
        <taxon>Pipidae</taxon>
        <taxon>Xenopodinae</taxon>
        <taxon>Xenopus</taxon>
        <taxon>Silurana</taxon>
    </lineage>
</organism>
<sequence>MIMALSKTFGQKPVKFQLEEDGEYYMIGSEVGNYLRMFRGSLYKRYPSLWRRLATVEERKKIVASSHGKKYHGYTTLATSVTLLKASEVEEILDGNDEKYKAVSISTEPPTYLREQKAKRNSQWVPTLPNSSHHLDAVPCSTTINRNRMGRDKKRTFPLCFDDHDPAVIHENAAQSEVLVPIRLDMEIDGQKLRDAFTWNMNEKLMTPEMFAEILCDDLDLNPLAFVPAIASAIRQQIESYPTDSILEDQSDQRVIIKLNIHVGNISLVDQFEWDMSEKENSPEKFALKLCSELGLGGEFVTTIAYSIRGQLSWHQKTYAFSENPLPTVEIAIRNTGDADQWCPLLETLTDAEMEKKIRDQDRNTRRMRRLANTAPAW</sequence>
<protein>
    <recommendedName>
        <fullName>SWI/SNF-related matrix-associated actin-dependent regulator of chromatin subfamily B member 1</fullName>
    </recommendedName>
</protein>
<dbReference type="EMBL" id="BC076714">
    <property type="protein sequence ID" value="AAH76714.1"/>
    <property type="molecule type" value="mRNA"/>
</dbReference>
<dbReference type="RefSeq" id="NP_001006819.1">
    <property type="nucleotide sequence ID" value="NM_001006818.1"/>
</dbReference>
<dbReference type="SMR" id="Q6DFM1"/>
<dbReference type="FunCoup" id="Q6DFM1">
    <property type="interactions" value="1715"/>
</dbReference>
<dbReference type="STRING" id="8364.ENSXETP00000028640"/>
<dbReference type="PaxDb" id="8364-ENSXETP00000059024"/>
<dbReference type="DNASU" id="448543"/>
<dbReference type="GeneID" id="448543"/>
<dbReference type="KEGG" id="xtr:448543"/>
<dbReference type="AGR" id="Xenbase:XB-GENE-493598"/>
<dbReference type="CTD" id="6598"/>
<dbReference type="Xenbase" id="XB-GENE-493598">
    <property type="gene designation" value="smarcb1"/>
</dbReference>
<dbReference type="eggNOG" id="KOG1649">
    <property type="taxonomic scope" value="Eukaryota"/>
</dbReference>
<dbReference type="HOGENOM" id="CLU_035084_0_0_1"/>
<dbReference type="InParanoid" id="Q6DFM1"/>
<dbReference type="OMA" id="PPWVPTM"/>
<dbReference type="OrthoDB" id="515064at2759"/>
<dbReference type="PhylomeDB" id="Q6DFM1"/>
<dbReference type="Reactome" id="R-XTR-3214858">
    <property type="pathway name" value="RMTs methylate histone arginines"/>
</dbReference>
<dbReference type="Proteomes" id="UP000008143">
    <property type="component" value="Chromosome 1"/>
</dbReference>
<dbReference type="Bgee" id="ENSXETG00000022368">
    <property type="expression patterns" value="Expressed in gastrula and 14 other cell types or tissues"/>
</dbReference>
<dbReference type="GO" id="GO:0000228">
    <property type="term" value="C:nuclear chromosome"/>
    <property type="evidence" value="ECO:0007669"/>
    <property type="project" value="InterPro"/>
</dbReference>
<dbReference type="GO" id="GO:0003677">
    <property type="term" value="F:DNA binding"/>
    <property type="evidence" value="ECO:0000250"/>
    <property type="project" value="UniProtKB"/>
</dbReference>
<dbReference type="GO" id="GO:0006338">
    <property type="term" value="P:chromatin remodeling"/>
    <property type="evidence" value="ECO:0007669"/>
    <property type="project" value="InterPro"/>
</dbReference>
<dbReference type="CDD" id="cd21086">
    <property type="entry name" value="WH_NTD_SMARCB1"/>
    <property type="match status" value="1"/>
</dbReference>
<dbReference type="InterPro" id="IPR048664">
    <property type="entry name" value="INI1_DNA-bd"/>
</dbReference>
<dbReference type="InterPro" id="IPR017393">
    <property type="entry name" value="Sfh1/SNF5"/>
</dbReference>
<dbReference type="InterPro" id="IPR006939">
    <property type="entry name" value="SNF5"/>
</dbReference>
<dbReference type="PANTHER" id="PTHR10019">
    <property type="entry name" value="SNF5"/>
    <property type="match status" value="1"/>
</dbReference>
<dbReference type="Pfam" id="PF21459">
    <property type="entry name" value="INI1_DNA-bd"/>
    <property type="match status" value="1"/>
</dbReference>
<dbReference type="Pfam" id="PF04855">
    <property type="entry name" value="SNF5"/>
    <property type="match status" value="1"/>
</dbReference>
<dbReference type="PIRSF" id="PIRSF038126">
    <property type="entry name" value="SWI_SNF"/>
    <property type="match status" value="1"/>
</dbReference>
<keyword id="KW-0010">Activator</keyword>
<keyword id="KW-0238">DNA-binding</keyword>
<keyword id="KW-0539">Nucleus</keyword>
<keyword id="KW-1185">Reference proteome</keyword>
<keyword id="KW-0804">Transcription</keyword>
<keyword id="KW-0805">Transcription regulation</keyword>
<name>SNF5_XENTR</name>
<accession>Q6DFM1</accession>